<keyword id="KW-0238">DNA-binding</keyword>
<keyword id="KW-0479">Metal-binding</keyword>
<keyword id="KW-0539">Nucleus</keyword>
<keyword id="KW-1185">Reference proteome</keyword>
<keyword id="KW-0677">Repeat</keyword>
<keyword id="KW-0804">Transcription</keyword>
<keyword id="KW-0805">Transcription regulation</keyword>
<keyword id="KW-0862">Zinc</keyword>
<keyword id="KW-0863">Zinc-finger</keyword>
<proteinExistence type="evidence at protein level"/>
<protein>
    <recommendedName>
        <fullName>Zinc finger protein CONSTANS-LIKE 1</fullName>
    </recommendedName>
</protein>
<sequence>MLKVESNWAQACDTCRSAACTVYCRADSAYLCSSCDAQVHAANRLASRHERVRVCQSCERAPAAFFCKADAASLCTTCDSEIHSANPLARRHQRVPILPISEYSYSSTATNHSCETTVTDPENRLVLGQEEEDEDEAEAASWLLPNSGKNSGNNNGFSIGDEFLNLVDYSSSDKQFTDQSNQYQLDCNVPQRSYGEDGVVPLQIEVSKGMYQEQQNFQLSINCGSWGALRSSNGSLSHMVNVSSMDLGVVPESTTSDATVSNPRSPKAVTDQPPYPPAQMLSPRDREARVLRYREKKKMRKFEKTIRYASRKAYAEKRPRIKGRFAKKKDVDEEANQAFSTMITFDTGYGIVPSF</sequence>
<organism>
    <name type="scientific">Arabidopsis thaliana</name>
    <name type="common">Mouse-ear cress</name>
    <dbReference type="NCBI Taxonomy" id="3702"/>
    <lineage>
        <taxon>Eukaryota</taxon>
        <taxon>Viridiplantae</taxon>
        <taxon>Streptophyta</taxon>
        <taxon>Embryophyta</taxon>
        <taxon>Tracheophyta</taxon>
        <taxon>Spermatophyta</taxon>
        <taxon>Magnoliopsida</taxon>
        <taxon>eudicotyledons</taxon>
        <taxon>Gunneridae</taxon>
        <taxon>Pentapetalae</taxon>
        <taxon>rosids</taxon>
        <taxon>malvids</taxon>
        <taxon>Brassicales</taxon>
        <taxon>Brassicaceae</taxon>
        <taxon>Camelineae</taxon>
        <taxon>Arabidopsis</taxon>
    </lineage>
</organism>
<comment type="function">
    <text>Putative transcription factor that may be involved in the light input to the circadian clock but does not affect flowering time.</text>
</comment>
<comment type="interaction">
    <interactant intactId="EBI-1112154">
        <id>O50055</id>
    </interactant>
    <interactant intactId="EBI-4430993">
        <id>C0SVM5</id>
        <label>BBX19</label>
    </interactant>
    <organismsDiffer>false</organismsDiffer>
    <experiments>3</experiments>
</comment>
<comment type="interaction">
    <interactant intactId="EBI-1112154">
        <id>O50055</id>
    </interactant>
    <interactant intactId="EBI-15191793">
        <id>O82617</id>
        <label>BBX23</label>
    </interactant>
    <organismsDiffer>false</organismsDiffer>
    <experiments>3</experiments>
</comment>
<comment type="interaction">
    <interactant intactId="EBI-1112154">
        <id>O50055</id>
    </interactant>
    <interactant intactId="EBI-1112154">
        <id>O50055</id>
        <label>COL1</label>
    </interactant>
    <organismsDiffer>false</organismsDiffer>
    <experiments>2</experiments>
</comment>
<comment type="interaction">
    <interactant intactId="EBI-1112154">
        <id>O50055</id>
    </interactant>
    <interactant intactId="EBI-2466050">
        <id>Q8L4B2</id>
        <label>NFYC9</label>
    </interactant>
    <organismsDiffer>false</organismsDiffer>
    <experiments>3</experiments>
</comment>
<comment type="interaction">
    <interactant intactId="EBI-1112154">
        <id>O50055</id>
    </interactant>
    <interactant intactId="EBI-626992">
        <id>Q9SYX2</id>
        <label>SPA1</label>
    </interactant>
    <organismsDiffer>false</organismsDiffer>
    <experiments>10</experiments>
</comment>
<comment type="interaction">
    <interactant intactId="EBI-1112154">
        <id>O50055</id>
    </interactant>
    <interactant intactId="EBI-626921">
        <id>Q9LJR3</id>
        <label>SPA3</label>
    </interactant>
    <organismsDiffer>false</organismsDiffer>
    <experiments>7</experiments>
</comment>
<comment type="interaction">
    <interactant intactId="EBI-1112154">
        <id>O50055</id>
    </interactant>
    <interactant intactId="EBI-626943">
        <id>Q94BM7</id>
        <label>SPA4</label>
    </interactant>
    <organismsDiffer>false</organismsDiffer>
    <experiments>7</experiments>
</comment>
<comment type="subcellular location">
    <subcellularLocation>
        <location evidence="4">Nucleus</location>
    </subcellularLocation>
</comment>
<comment type="tissue specificity">
    <text>Highly expressed in leaves and at lower levels in stems, flowers and siliques. Not detected in roots.</text>
</comment>
<comment type="developmental stage">
    <text>Expressed throughout development.</text>
</comment>
<comment type="induction">
    <text>Expressed with a circadian rhythm showing a peak at dawn.</text>
</comment>
<comment type="similarity">
    <text evidence="4">Belongs to the CONSTANS family.</text>
</comment>
<name>COL1_ARATH</name>
<feature type="chain" id="PRO_0000113278" description="Zinc finger protein CONSTANS-LIKE 1">
    <location>
        <begin position="1"/>
        <end position="355"/>
    </location>
</feature>
<feature type="domain" description="CCT" evidence="2">
    <location>
        <begin position="286"/>
        <end position="328"/>
    </location>
</feature>
<feature type="zinc finger region" description="B box-type 1; atypical" evidence="1">
    <location>
        <begin position="12"/>
        <end position="54"/>
    </location>
</feature>
<feature type="zinc finger region" description="B box-type 2; atypical" evidence="1">
    <location>
        <begin position="55"/>
        <end position="97"/>
    </location>
</feature>
<feature type="region of interest" description="Disordered" evidence="3">
    <location>
        <begin position="252"/>
        <end position="281"/>
    </location>
</feature>
<feature type="compositionally biased region" description="Polar residues" evidence="3">
    <location>
        <begin position="252"/>
        <end position="264"/>
    </location>
</feature>
<feature type="binding site" evidence="1">
    <location>
        <position position="12"/>
    </location>
    <ligand>
        <name>Zn(2+)</name>
        <dbReference type="ChEBI" id="CHEBI:29105"/>
        <label>1</label>
    </ligand>
</feature>
<feature type="binding site" evidence="1">
    <location>
        <position position="15"/>
    </location>
    <ligand>
        <name>Zn(2+)</name>
        <dbReference type="ChEBI" id="CHEBI:29105"/>
        <label>1</label>
    </ligand>
</feature>
<feature type="binding site" evidence="1">
    <location>
        <position position="35"/>
    </location>
    <ligand>
        <name>Zn(2+)</name>
        <dbReference type="ChEBI" id="CHEBI:29105"/>
        <label>1</label>
    </ligand>
</feature>
<feature type="binding site" evidence="1">
    <location>
        <position position="40"/>
    </location>
    <ligand>
        <name>Zn(2+)</name>
        <dbReference type="ChEBI" id="CHEBI:29105"/>
        <label>1</label>
    </ligand>
</feature>
<feature type="binding site" evidence="1">
    <location>
        <position position="55"/>
    </location>
    <ligand>
        <name>Zn(2+)</name>
        <dbReference type="ChEBI" id="CHEBI:29105"/>
        <label>2</label>
    </ligand>
</feature>
<feature type="binding site" evidence="1">
    <location>
        <position position="58"/>
    </location>
    <ligand>
        <name>Zn(2+)</name>
        <dbReference type="ChEBI" id="CHEBI:29105"/>
        <label>2</label>
    </ligand>
</feature>
<feature type="binding site" evidence="1">
    <location>
        <position position="78"/>
    </location>
    <ligand>
        <name>Zn(2+)</name>
        <dbReference type="ChEBI" id="CHEBI:29105"/>
        <label>2</label>
    </ligand>
</feature>
<feature type="binding site" evidence="1">
    <location>
        <position position="83"/>
    </location>
    <ligand>
        <name>Zn(2+)</name>
        <dbReference type="ChEBI" id="CHEBI:29105"/>
        <label>2</label>
    </ligand>
</feature>
<gene>
    <name type="primary">COL1</name>
    <name type="ordered locus">At5g15850</name>
    <name type="ORF">F14F8_230</name>
</gene>
<dbReference type="EMBL" id="Y10555">
    <property type="protein sequence ID" value="CAA71587.1"/>
    <property type="molecule type" value="mRNA"/>
</dbReference>
<dbReference type="EMBL" id="Y10556">
    <property type="protein sequence ID" value="CAA71588.1"/>
    <property type="molecule type" value="Genomic_DNA"/>
</dbReference>
<dbReference type="EMBL" id="AL391144">
    <property type="protein sequence ID" value="CAC01784.1"/>
    <property type="molecule type" value="Genomic_DNA"/>
</dbReference>
<dbReference type="EMBL" id="CP002688">
    <property type="protein sequence ID" value="AED92215.1"/>
    <property type="molecule type" value="Genomic_DNA"/>
</dbReference>
<dbReference type="EMBL" id="AY074369">
    <property type="protein sequence ID" value="AAL67065.1"/>
    <property type="molecule type" value="mRNA"/>
</dbReference>
<dbReference type="EMBL" id="BT002363">
    <property type="protein sequence ID" value="AAN86196.1"/>
    <property type="molecule type" value="mRNA"/>
</dbReference>
<dbReference type="PIR" id="T51414">
    <property type="entry name" value="T51414"/>
</dbReference>
<dbReference type="RefSeq" id="NP_197089.1">
    <property type="nucleotide sequence ID" value="NM_121590.2"/>
</dbReference>
<dbReference type="SMR" id="O50055"/>
<dbReference type="BioGRID" id="16718">
    <property type="interactions" value="53"/>
</dbReference>
<dbReference type="FunCoup" id="O50055">
    <property type="interactions" value="4"/>
</dbReference>
<dbReference type="IntAct" id="O50055">
    <property type="interactions" value="47"/>
</dbReference>
<dbReference type="STRING" id="3702.O50055"/>
<dbReference type="PaxDb" id="3702-AT5G15850.1"/>
<dbReference type="ProteomicsDB" id="240918"/>
<dbReference type="EnsemblPlants" id="AT5G15850.1">
    <property type="protein sequence ID" value="AT5G15850.1"/>
    <property type="gene ID" value="AT5G15850"/>
</dbReference>
<dbReference type="GeneID" id="831442"/>
<dbReference type="Gramene" id="AT5G15850.1">
    <property type="protein sequence ID" value="AT5G15850.1"/>
    <property type="gene ID" value="AT5G15850"/>
</dbReference>
<dbReference type="KEGG" id="ath:AT5G15850"/>
<dbReference type="Araport" id="AT5G15850"/>
<dbReference type="TAIR" id="AT5G15850">
    <property type="gene designation" value="COL1"/>
</dbReference>
<dbReference type="eggNOG" id="KOG1601">
    <property type="taxonomic scope" value="Eukaryota"/>
</dbReference>
<dbReference type="HOGENOM" id="CLU_028225_3_2_1"/>
<dbReference type="InParanoid" id="O50055"/>
<dbReference type="OMA" id="DCNSCGH"/>
<dbReference type="OrthoDB" id="153872at2759"/>
<dbReference type="PhylomeDB" id="O50055"/>
<dbReference type="PRO" id="PR:O50055"/>
<dbReference type="Proteomes" id="UP000006548">
    <property type="component" value="Chromosome 5"/>
</dbReference>
<dbReference type="ExpressionAtlas" id="O50055">
    <property type="expression patterns" value="differential"/>
</dbReference>
<dbReference type="GO" id="GO:0005634">
    <property type="term" value="C:nucleus"/>
    <property type="evidence" value="ECO:0007669"/>
    <property type="project" value="UniProtKB-SubCell"/>
</dbReference>
<dbReference type="GO" id="GO:0003677">
    <property type="term" value="F:DNA binding"/>
    <property type="evidence" value="ECO:0007669"/>
    <property type="project" value="UniProtKB-KW"/>
</dbReference>
<dbReference type="GO" id="GO:0003700">
    <property type="term" value="F:DNA-binding transcription factor activity"/>
    <property type="evidence" value="ECO:0000250"/>
    <property type="project" value="TAIR"/>
</dbReference>
<dbReference type="GO" id="GO:0042802">
    <property type="term" value="F:identical protein binding"/>
    <property type="evidence" value="ECO:0000353"/>
    <property type="project" value="IntAct"/>
</dbReference>
<dbReference type="GO" id="GO:0008270">
    <property type="term" value="F:zinc ion binding"/>
    <property type="evidence" value="ECO:0007669"/>
    <property type="project" value="UniProtKB-KW"/>
</dbReference>
<dbReference type="GO" id="GO:0009909">
    <property type="term" value="P:regulation of flower development"/>
    <property type="evidence" value="ECO:0000315"/>
    <property type="project" value="TAIR"/>
</dbReference>
<dbReference type="CDD" id="cd19821">
    <property type="entry name" value="Bbox1_BBX-like"/>
    <property type="match status" value="2"/>
</dbReference>
<dbReference type="InterPro" id="IPR010402">
    <property type="entry name" value="CCT_domain"/>
</dbReference>
<dbReference type="InterPro" id="IPR045281">
    <property type="entry name" value="CONSTANS-like"/>
</dbReference>
<dbReference type="InterPro" id="IPR049808">
    <property type="entry name" value="CONSTANS-like_Bbox1"/>
</dbReference>
<dbReference type="InterPro" id="IPR000315">
    <property type="entry name" value="Znf_B-box"/>
</dbReference>
<dbReference type="PANTHER" id="PTHR31319:SF39">
    <property type="entry name" value="ZINC FINGER PROTEIN CONSTANS-LIKE 1"/>
    <property type="match status" value="1"/>
</dbReference>
<dbReference type="PANTHER" id="PTHR31319">
    <property type="entry name" value="ZINC FINGER PROTEIN CONSTANS-LIKE 4"/>
    <property type="match status" value="1"/>
</dbReference>
<dbReference type="Pfam" id="PF06203">
    <property type="entry name" value="CCT"/>
    <property type="match status" value="1"/>
</dbReference>
<dbReference type="Pfam" id="PF00643">
    <property type="entry name" value="zf-B_box"/>
    <property type="match status" value="1"/>
</dbReference>
<dbReference type="SMART" id="SM00336">
    <property type="entry name" value="BBOX"/>
    <property type="match status" value="2"/>
</dbReference>
<dbReference type="PROSITE" id="PS51017">
    <property type="entry name" value="CCT"/>
    <property type="match status" value="1"/>
</dbReference>
<dbReference type="PROSITE" id="PS50119">
    <property type="entry name" value="ZF_BBOX"/>
    <property type="match status" value="2"/>
</dbReference>
<evidence type="ECO:0000255" key="1">
    <source>
        <dbReference type="PROSITE-ProRule" id="PRU00024"/>
    </source>
</evidence>
<evidence type="ECO:0000255" key="2">
    <source>
        <dbReference type="PROSITE-ProRule" id="PRU00357"/>
    </source>
</evidence>
<evidence type="ECO:0000256" key="3">
    <source>
        <dbReference type="SAM" id="MobiDB-lite"/>
    </source>
</evidence>
<evidence type="ECO:0000305" key="4"/>
<accession>O50055</accession>
<reference key="1">
    <citation type="online journal article" date="1997" name="Plant Gene Register">
        <title>The flowering-time gene CONSTANS and homologue CONSTANS LIKE 1 exist as a tandem repeat on chromosome 5 of Arabidopsis.</title>
        <authorList>
            <person name="Putterill J.J."/>
            <person name="Ledger S.E."/>
            <person name="Lee K."/>
            <person name="Robson F."/>
            <person name="Murphy G."/>
            <person name="Coupland G."/>
        </authorList>
        <locator>PGR97-077</locator>
    </citation>
    <scope>NUCLEOTIDE SEQUENCE [MRNA]</scope>
    <source>
        <strain>cv. Landsberg erecta</strain>
        <tissue>Aerial part</tissue>
    </source>
</reference>
<reference key="2">
    <citation type="journal article" date="2000" name="Nature">
        <title>Sequence and analysis of chromosome 5 of the plant Arabidopsis thaliana.</title>
        <authorList>
            <person name="Tabata S."/>
            <person name="Kaneko T."/>
            <person name="Nakamura Y."/>
            <person name="Kotani H."/>
            <person name="Kato T."/>
            <person name="Asamizu E."/>
            <person name="Miyajima N."/>
            <person name="Sasamoto S."/>
            <person name="Kimura T."/>
            <person name="Hosouchi T."/>
            <person name="Kawashima K."/>
            <person name="Kohara M."/>
            <person name="Matsumoto M."/>
            <person name="Matsuno A."/>
            <person name="Muraki A."/>
            <person name="Nakayama S."/>
            <person name="Nakazaki N."/>
            <person name="Naruo K."/>
            <person name="Okumura S."/>
            <person name="Shinpo S."/>
            <person name="Takeuchi C."/>
            <person name="Wada T."/>
            <person name="Watanabe A."/>
            <person name="Yamada M."/>
            <person name="Yasuda M."/>
            <person name="Sato S."/>
            <person name="de la Bastide M."/>
            <person name="Huang E."/>
            <person name="Spiegel L."/>
            <person name="Gnoj L."/>
            <person name="O'Shaughnessy A."/>
            <person name="Preston R."/>
            <person name="Habermann K."/>
            <person name="Murray J."/>
            <person name="Johnson D."/>
            <person name="Rohlfing T."/>
            <person name="Nelson J."/>
            <person name="Stoneking T."/>
            <person name="Pepin K."/>
            <person name="Spieth J."/>
            <person name="Sekhon M."/>
            <person name="Armstrong J."/>
            <person name="Becker M."/>
            <person name="Belter E."/>
            <person name="Cordum H."/>
            <person name="Cordes M."/>
            <person name="Courtney L."/>
            <person name="Courtney W."/>
            <person name="Dante M."/>
            <person name="Du H."/>
            <person name="Edwards J."/>
            <person name="Fryman J."/>
            <person name="Haakensen B."/>
            <person name="Lamar E."/>
            <person name="Latreille P."/>
            <person name="Leonard S."/>
            <person name="Meyer R."/>
            <person name="Mulvaney E."/>
            <person name="Ozersky P."/>
            <person name="Riley A."/>
            <person name="Strowmatt C."/>
            <person name="Wagner-McPherson C."/>
            <person name="Wollam A."/>
            <person name="Yoakum M."/>
            <person name="Bell M."/>
            <person name="Dedhia N."/>
            <person name="Parnell L."/>
            <person name="Shah R."/>
            <person name="Rodriguez M."/>
            <person name="Hoon See L."/>
            <person name="Vil D."/>
            <person name="Baker J."/>
            <person name="Kirchoff K."/>
            <person name="Toth K."/>
            <person name="King L."/>
            <person name="Bahret A."/>
            <person name="Miller B."/>
            <person name="Marra M.A."/>
            <person name="Martienssen R."/>
            <person name="McCombie W.R."/>
            <person name="Wilson R.K."/>
            <person name="Murphy G."/>
            <person name="Bancroft I."/>
            <person name="Volckaert G."/>
            <person name="Wambutt R."/>
            <person name="Duesterhoeft A."/>
            <person name="Stiekema W."/>
            <person name="Pohl T."/>
            <person name="Entian K.-D."/>
            <person name="Terryn N."/>
            <person name="Hartley N."/>
            <person name="Bent E."/>
            <person name="Johnson S."/>
            <person name="Langham S.-A."/>
            <person name="McCullagh B."/>
            <person name="Robben J."/>
            <person name="Grymonprez B."/>
            <person name="Zimmermann W."/>
            <person name="Ramsperger U."/>
            <person name="Wedler H."/>
            <person name="Balke K."/>
            <person name="Wedler E."/>
            <person name="Peters S."/>
            <person name="van Staveren M."/>
            <person name="Dirkse W."/>
            <person name="Mooijman P."/>
            <person name="Klein Lankhorst R."/>
            <person name="Weitzenegger T."/>
            <person name="Bothe G."/>
            <person name="Rose M."/>
            <person name="Hauf J."/>
            <person name="Berneiser S."/>
            <person name="Hempel S."/>
            <person name="Feldpausch M."/>
            <person name="Lamberth S."/>
            <person name="Villarroel R."/>
            <person name="Gielen J."/>
            <person name="Ardiles W."/>
            <person name="Bents O."/>
            <person name="Lemcke K."/>
            <person name="Kolesov G."/>
            <person name="Mayer K.F.X."/>
            <person name="Rudd S."/>
            <person name="Schoof H."/>
            <person name="Schueller C."/>
            <person name="Zaccaria P."/>
            <person name="Mewes H.-W."/>
            <person name="Bevan M."/>
            <person name="Fransz P.F."/>
        </authorList>
    </citation>
    <scope>NUCLEOTIDE SEQUENCE [LARGE SCALE GENOMIC DNA]</scope>
    <source>
        <strain>cv. Columbia</strain>
    </source>
</reference>
<reference key="3">
    <citation type="journal article" date="2017" name="Plant J.">
        <title>Araport11: a complete reannotation of the Arabidopsis thaliana reference genome.</title>
        <authorList>
            <person name="Cheng C.Y."/>
            <person name="Krishnakumar V."/>
            <person name="Chan A.P."/>
            <person name="Thibaud-Nissen F."/>
            <person name="Schobel S."/>
            <person name="Town C.D."/>
        </authorList>
    </citation>
    <scope>GENOME REANNOTATION</scope>
    <source>
        <strain>cv. Columbia</strain>
    </source>
</reference>
<reference key="4">
    <citation type="journal article" date="2003" name="Science">
        <title>Empirical analysis of transcriptional activity in the Arabidopsis genome.</title>
        <authorList>
            <person name="Yamada K."/>
            <person name="Lim J."/>
            <person name="Dale J.M."/>
            <person name="Chen H."/>
            <person name="Shinn P."/>
            <person name="Palm C.J."/>
            <person name="Southwick A.M."/>
            <person name="Wu H.C."/>
            <person name="Kim C.J."/>
            <person name="Nguyen M."/>
            <person name="Pham P.K."/>
            <person name="Cheuk R.F."/>
            <person name="Karlin-Newmann G."/>
            <person name="Liu S.X."/>
            <person name="Lam B."/>
            <person name="Sakano H."/>
            <person name="Wu T."/>
            <person name="Yu G."/>
            <person name="Miranda M."/>
            <person name="Quach H.L."/>
            <person name="Tripp M."/>
            <person name="Chang C.H."/>
            <person name="Lee J.M."/>
            <person name="Toriumi M.J."/>
            <person name="Chan M.M."/>
            <person name="Tang C.C."/>
            <person name="Onodera C.S."/>
            <person name="Deng J.M."/>
            <person name="Akiyama K."/>
            <person name="Ansari Y."/>
            <person name="Arakawa T."/>
            <person name="Banh J."/>
            <person name="Banno F."/>
            <person name="Bowser L."/>
            <person name="Brooks S.Y."/>
            <person name="Carninci P."/>
            <person name="Chao Q."/>
            <person name="Choy N."/>
            <person name="Enju A."/>
            <person name="Goldsmith A.D."/>
            <person name="Gurjal M."/>
            <person name="Hansen N.F."/>
            <person name="Hayashizaki Y."/>
            <person name="Johnson-Hopson C."/>
            <person name="Hsuan V.W."/>
            <person name="Iida K."/>
            <person name="Karnes M."/>
            <person name="Khan S."/>
            <person name="Koesema E."/>
            <person name="Ishida J."/>
            <person name="Jiang P.X."/>
            <person name="Jones T."/>
            <person name="Kawai J."/>
            <person name="Kamiya A."/>
            <person name="Meyers C."/>
            <person name="Nakajima M."/>
            <person name="Narusaka M."/>
            <person name="Seki M."/>
            <person name="Sakurai T."/>
            <person name="Satou M."/>
            <person name="Tamse R."/>
            <person name="Vaysberg M."/>
            <person name="Wallender E.K."/>
            <person name="Wong C."/>
            <person name="Yamamura Y."/>
            <person name="Yuan S."/>
            <person name="Shinozaki K."/>
            <person name="Davis R.W."/>
            <person name="Theologis A."/>
            <person name="Ecker J.R."/>
        </authorList>
    </citation>
    <scope>NUCLEOTIDE SEQUENCE [LARGE SCALE MRNA]</scope>
    <source>
        <strain>cv. Columbia</strain>
    </source>
</reference>
<reference key="5">
    <citation type="journal article" date="2001" name="Plant J.">
        <title>Analysis of the function of two circadian-regulated CONSTANS-LIKE genes.</title>
        <authorList>
            <person name="Ledger S.E."/>
            <person name="Strayer C."/>
            <person name="Ashton F."/>
            <person name="Kay S.A."/>
            <person name="Putterill J.J."/>
        </authorList>
    </citation>
    <scope>CHARACTERIZATION</scope>
    <source>
        <strain>cv. C24</strain>
    </source>
</reference>
<reference key="6">
    <citation type="journal article" date="2003" name="Plant Physiol.">
        <title>The evolution of CONSTANS-like gene families in barley, rice, and Arabidopsis.</title>
        <authorList>
            <person name="Griffiths S."/>
            <person name="Dunford R.P."/>
            <person name="Coupland G."/>
            <person name="Laurie D.A."/>
        </authorList>
    </citation>
    <scope>GENE FAMILY</scope>
    <scope>NOMENCLATURE</scope>
</reference>